<evidence type="ECO:0000250" key="1"/>
<evidence type="ECO:0000269" key="2">
    <source>
    </source>
</evidence>
<evidence type="ECO:0000305" key="3"/>
<name>PA2H_VIPNI</name>
<dbReference type="EMBL" id="AM707023">
    <property type="protein sequence ID" value="CAM92310.1"/>
    <property type="molecule type" value="mRNA"/>
</dbReference>
<dbReference type="SMR" id="A4VBF0"/>
<dbReference type="GO" id="GO:0005576">
    <property type="term" value="C:extracellular region"/>
    <property type="evidence" value="ECO:0007669"/>
    <property type="project" value="UniProtKB-SubCell"/>
</dbReference>
<dbReference type="GO" id="GO:0005509">
    <property type="term" value="F:calcium ion binding"/>
    <property type="evidence" value="ECO:0007669"/>
    <property type="project" value="InterPro"/>
</dbReference>
<dbReference type="GO" id="GO:0047498">
    <property type="term" value="F:calcium-dependent phospholipase A2 activity"/>
    <property type="evidence" value="ECO:0007669"/>
    <property type="project" value="TreeGrafter"/>
</dbReference>
<dbReference type="GO" id="GO:0019834">
    <property type="term" value="F:phospholipase A2 inhibitor activity"/>
    <property type="evidence" value="ECO:0007669"/>
    <property type="project" value="UniProtKB-KW"/>
</dbReference>
<dbReference type="GO" id="GO:0005543">
    <property type="term" value="F:phospholipid binding"/>
    <property type="evidence" value="ECO:0007669"/>
    <property type="project" value="TreeGrafter"/>
</dbReference>
<dbReference type="GO" id="GO:0090729">
    <property type="term" value="F:toxin activity"/>
    <property type="evidence" value="ECO:0007669"/>
    <property type="project" value="UniProtKB-KW"/>
</dbReference>
<dbReference type="GO" id="GO:0050482">
    <property type="term" value="P:arachidonate secretion"/>
    <property type="evidence" value="ECO:0007669"/>
    <property type="project" value="InterPro"/>
</dbReference>
<dbReference type="GO" id="GO:0016042">
    <property type="term" value="P:lipid catabolic process"/>
    <property type="evidence" value="ECO:0007669"/>
    <property type="project" value="InterPro"/>
</dbReference>
<dbReference type="GO" id="GO:0042130">
    <property type="term" value="P:negative regulation of T cell proliferation"/>
    <property type="evidence" value="ECO:0007669"/>
    <property type="project" value="TreeGrafter"/>
</dbReference>
<dbReference type="GO" id="GO:0006644">
    <property type="term" value="P:phospholipid metabolic process"/>
    <property type="evidence" value="ECO:0007669"/>
    <property type="project" value="InterPro"/>
</dbReference>
<dbReference type="CDD" id="cd00125">
    <property type="entry name" value="PLA2c"/>
    <property type="match status" value="1"/>
</dbReference>
<dbReference type="FunFam" id="1.20.90.10:FF:000001">
    <property type="entry name" value="Basic phospholipase A2 homolog"/>
    <property type="match status" value="1"/>
</dbReference>
<dbReference type="Gene3D" id="1.20.90.10">
    <property type="entry name" value="Phospholipase A2 domain"/>
    <property type="match status" value="1"/>
</dbReference>
<dbReference type="InterPro" id="IPR001211">
    <property type="entry name" value="PLipase_A2"/>
</dbReference>
<dbReference type="InterPro" id="IPR033112">
    <property type="entry name" value="PLipase_A2_Asp_AS"/>
</dbReference>
<dbReference type="InterPro" id="IPR016090">
    <property type="entry name" value="PLipase_A2_dom"/>
</dbReference>
<dbReference type="InterPro" id="IPR036444">
    <property type="entry name" value="PLipase_A2_dom_sf"/>
</dbReference>
<dbReference type="PANTHER" id="PTHR11716">
    <property type="entry name" value="PHOSPHOLIPASE A2 FAMILY MEMBER"/>
    <property type="match status" value="1"/>
</dbReference>
<dbReference type="PANTHER" id="PTHR11716:SF9">
    <property type="entry name" value="PHOSPHOLIPASE A2, MEMBRANE ASSOCIATED"/>
    <property type="match status" value="1"/>
</dbReference>
<dbReference type="Pfam" id="PF00068">
    <property type="entry name" value="Phospholip_A2_1"/>
    <property type="match status" value="1"/>
</dbReference>
<dbReference type="PRINTS" id="PR00389">
    <property type="entry name" value="PHPHLIPASEA2"/>
</dbReference>
<dbReference type="SMART" id="SM00085">
    <property type="entry name" value="PA2c"/>
    <property type="match status" value="1"/>
</dbReference>
<dbReference type="SUPFAM" id="SSF48619">
    <property type="entry name" value="Phospholipase A2, PLA2"/>
    <property type="match status" value="1"/>
</dbReference>
<dbReference type="PROSITE" id="PS00119">
    <property type="entry name" value="PA2_ASP"/>
    <property type="match status" value="1"/>
</dbReference>
<sequence>MRTLWIVAVCLIGVEGNLFQFGDMILQKTGKEAVHSYAIYGCYCGWGGQGRAQDATDRCCFAQDCCYGRVNDCNPKTATYTYSFENGDIVCGDNDLCLRAVCECDRAAAICLGENVNTYDKNYEYYSISHCTEESEQC</sequence>
<comment type="function">
    <text evidence="2">Heterodimer: slightly affects neuromuscular transmission acting presynaptically. It has a low catalytic activity, a low anticoagulant activity and weakly inhibits ADP-induced platelet aggregation.</text>
</comment>
<comment type="function">
    <text evidence="2">Monomer: has no activity (neurotoxic, catalytic, anticoagulant and a ADP-induced platelet aggregation), but inhibits phospholipase A2.</text>
</comment>
<comment type="subunit">
    <text>Heterodimer of an acidic and a basic chain; non-covalently linked. The basic chain is toxic and has phospholipase A2 activity (chain HDP-1P (AC Q1RP79) or HDP-2P (AC Q1RP78)) and the acidic chain is non-toxic and functions as its inhibitor (chain HPD-1I).</text>
</comment>
<comment type="subcellular location">
    <subcellularLocation>
        <location>Secreted</location>
    </subcellularLocation>
</comment>
<comment type="tissue specificity">
    <text>Expressed by the venom gland.</text>
</comment>
<comment type="mass spectrometry"/>
<comment type="similarity">
    <text evidence="3">Belongs to the phospholipase A2 family. Group II subfamily. D49 sub-subfamily.</text>
</comment>
<comment type="caution">
    <text evidence="3">In contrast to other phospholipases, it lacks the typical His active site (His-&gt;Gln in position 63).</text>
</comment>
<protein>
    <recommendedName>
        <fullName>Acidic phospholipase A2 inhibitor chain HPD-1I</fullName>
        <shortName>svPLA2 homolog</shortName>
    </recommendedName>
    <alternativeName>
        <fullName>Heterodimeric neurotoxic phospholipases A2 acidic subunit</fullName>
    </alternativeName>
</protein>
<proteinExistence type="evidence at protein level"/>
<feature type="signal peptide" evidence="2">
    <location>
        <begin position="1"/>
        <end position="16"/>
    </location>
</feature>
<feature type="chain" id="PRO_5000237460" description="Acidic phospholipase A2 inhibitor chain HPD-1I">
    <location>
        <begin position="17"/>
        <end position="138"/>
    </location>
</feature>
<feature type="disulfide bond" evidence="1">
    <location>
        <begin position="42"/>
        <end position="131"/>
    </location>
</feature>
<feature type="disulfide bond" evidence="1">
    <location>
        <begin position="44"/>
        <end position="60"/>
    </location>
</feature>
<feature type="disulfide bond" evidence="1">
    <location>
        <begin position="59"/>
        <end position="111"/>
    </location>
</feature>
<feature type="disulfide bond" evidence="1">
    <location>
        <begin position="65"/>
        <end position="138"/>
    </location>
</feature>
<feature type="disulfide bond" evidence="1">
    <location>
        <begin position="66"/>
        <end position="104"/>
    </location>
</feature>
<feature type="disulfide bond" evidence="1">
    <location>
        <begin position="73"/>
        <end position="97"/>
    </location>
</feature>
<feature type="disulfide bond" evidence="1">
    <location>
        <begin position="91"/>
        <end position="102"/>
    </location>
</feature>
<keyword id="KW-1203">Blood coagulation cascade inhibiting toxin</keyword>
<keyword id="KW-0903">Direct protein sequencing</keyword>
<keyword id="KW-1015">Disulfide bond</keyword>
<keyword id="KW-1199">Hemostasis impairing toxin</keyword>
<keyword id="KW-0528">Neurotoxin</keyword>
<keyword id="KW-0593">Phospholipase A2 inhibitor</keyword>
<keyword id="KW-1201">Platelet aggregation inhibiting toxin</keyword>
<keyword id="KW-0638">Presynaptic neurotoxin</keyword>
<keyword id="KW-0964">Secreted</keyword>
<keyword id="KW-0732">Signal</keyword>
<keyword id="KW-0800">Toxin</keyword>
<accession>A4VBF0</accession>
<organism>
    <name type="scientific">Vipera nikolskii</name>
    <name type="common">Nikolsky's adder</name>
    <name type="synonym">Vipera berus nikolskii</name>
    <dbReference type="NCBI Taxonomy" id="1808362"/>
    <lineage>
        <taxon>Eukaryota</taxon>
        <taxon>Metazoa</taxon>
        <taxon>Chordata</taxon>
        <taxon>Craniata</taxon>
        <taxon>Vertebrata</taxon>
        <taxon>Euteleostomi</taxon>
        <taxon>Lepidosauria</taxon>
        <taxon>Squamata</taxon>
        <taxon>Bifurcata</taxon>
        <taxon>Unidentata</taxon>
        <taxon>Episquamata</taxon>
        <taxon>Toxicofera</taxon>
        <taxon>Serpentes</taxon>
        <taxon>Colubroidea</taxon>
        <taxon>Viperidae</taxon>
        <taxon>Viperinae</taxon>
        <taxon>Vipera</taxon>
    </lineage>
</organism>
<reference key="1">
    <citation type="journal article" date="2008" name="Toxicon">
        <title>Heterodimeric neurotoxic phospholipases A2 -- the first proteins from venom of recently established species Vipera nikolskii: implication of venom composition in viper systematics.</title>
        <authorList>
            <person name="Ramazanova A.S."/>
            <person name="Zavada L.L."/>
            <person name="Starkov V.G."/>
            <person name="Kovyazina I.V."/>
            <person name="Subbotina T.F."/>
            <person name="Kostyukhina E.E."/>
            <person name="Dementieva I.N."/>
            <person name="Ovchinnikova T.V."/>
            <person name="Utkin Y.N."/>
        </authorList>
    </citation>
    <scope>NUCLEOTIDE SEQUENCE [MRNA]</scope>
    <scope>PROTEIN SEQUENCE OF 17-27</scope>
    <scope>FUNCTION</scope>
    <scope>MASS SPECTROMETRY</scope>
    <source>
        <tissue>Venom</tissue>
        <tissue>Venom gland</tissue>
    </source>
</reference>